<evidence type="ECO:0000255" key="1">
    <source>
        <dbReference type="HAMAP-Rule" id="MF_00646"/>
    </source>
</evidence>
<sequence length="188" mass="20590">MKANDIKKGNVVEYNGGIYQIRDIERSSPQGRGGNVRFRFIMYSVPGGVKTDASLDADDNLPDVELLRRLSTFSYKDGEAFVFMDDEDFTPYTLDADVIGTDAGYITDGLTGIYVQVIDDQPVAVQLPQTVTLEVVETPPELKGGTATKRPKPAKLNTGMEIMVPEYITNGERVLVNTTTGEFAGRAD</sequence>
<feature type="chain" id="PRO_0000259905" description="Elongation factor P-like protein">
    <location>
        <begin position="1"/>
        <end position="188"/>
    </location>
</feature>
<gene>
    <name type="ordered locus">XOO2755</name>
</gene>
<name>EFPL_XANOM</name>
<protein>
    <recommendedName>
        <fullName evidence="1">Elongation factor P-like protein</fullName>
    </recommendedName>
</protein>
<comment type="similarity">
    <text evidence="1">Belongs to the elongation factor P family.</text>
</comment>
<accession>Q2P1R7</accession>
<reference key="1">
    <citation type="journal article" date="2005" name="Jpn. Agric. Res. Q.">
        <title>Genome sequence of Xanthomonas oryzae pv. oryzae suggests contribution of large numbers of effector genes and insertion sequences to its race diversity.</title>
        <authorList>
            <person name="Ochiai H."/>
            <person name="Inoue Y."/>
            <person name="Takeya M."/>
            <person name="Sasaki A."/>
            <person name="Kaku H."/>
        </authorList>
    </citation>
    <scope>NUCLEOTIDE SEQUENCE [LARGE SCALE GENOMIC DNA]</scope>
    <source>
        <strain>MAFF 311018</strain>
    </source>
</reference>
<dbReference type="EMBL" id="AP008229">
    <property type="protein sequence ID" value="BAE69510.1"/>
    <property type="molecule type" value="Genomic_DNA"/>
</dbReference>
<dbReference type="SMR" id="Q2P1R7"/>
<dbReference type="KEGG" id="xom:XOO2755"/>
<dbReference type="HOGENOM" id="CLU_074944_2_0_6"/>
<dbReference type="GO" id="GO:0005737">
    <property type="term" value="C:cytoplasm"/>
    <property type="evidence" value="ECO:0007669"/>
    <property type="project" value="InterPro"/>
</dbReference>
<dbReference type="GO" id="GO:0003746">
    <property type="term" value="F:translation elongation factor activity"/>
    <property type="evidence" value="ECO:0007669"/>
    <property type="project" value="UniProtKB-UniRule"/>
</dbReference>
<dbReference type="GO" id="GO:0043043">
    <property type="term" value="P:peptide biosynthetic process"/>
    <property type="evidence" value="ECO:0007669"/>
    <property type="project" value="InterPro"/>
</dbReference>
<dbReference type="CDD" id="cd04470">
    <property type="entry name" value="S1_EF-P_repeat_1"/>
    <property type="match status" value="1"/>
</dbReference>
<dbReference type="CDD" id="cd05794">
    <property type="entry name" value="S1_EF-P_repeat_2"/>
    <property type="match status" value="1"/>
</dbReference>
<dbReference type="FunFam" id="2.40.50.140:FF:000004">
    <property type="entry name" value="Elongation factor P"/>
    <property type="match status" value="1"/>
</dbReference>
<dbReference type="FunFam" id="2.40.50.140:FF:000233">
    <property type="entry name" value="Elongation factor P-like protein"/>
    <property type="match status" value="1"/>
</dbReference>
<dbReference type="Gene3D" id="2.30.30.30">
    <property type="match status" value="1"/>
</dbReference>
<dbReference type="Gene3D" id="2.40.50.140">
    <property type="entry name" value="Nucleic acid-binding proteins"/>
    <property type="match status" value="2"/>
</dbReference>
<dbReference type="HAMAP" id="MF_00646">
    <property type="entry name" value="EFP"/>
    <property type="match status" value="1"/>
</dbReference>
<dbReference type="InterPro" id="IPR015365">
    <property type="entry name" value="Elong-fact-P_C"/>
</dbReference>
<dbReference type="InterPro" id="IPR012340">
    <property type="entry name" value="NA-bd_OB-fold"/>
</dbReference>
<dbReference type="InterPro" id="IPR014722">
    <property type="entry name" value="Rib_uL2_dom2"/>
</dbReference>
<dbReference type="InterPro" id="IPR020599">
    <property type="entry name" value="Transl_elong_fac_P/YeiP"/>
</dbReference>
<dbReference type="InterPro" id="IPR013185">
    <property type="entry name" value="Transl_elong_KOW-like"/>
</dbReference>
<dbReference type="InterPro" id="IPR011897">
    <property type="entry name" value="Transl_elong_p-like_YeiP"/>
</dbReference>
<dbReference type="InterPro" id="IPR001059">
    <property type="entry name" value="Transl_elong_P/YeiP_cen"/>
</dbReference>
<dbReference type="InterPro" id="IPR013852">
    <property type="entry name" value="Transl_elong_P/YeiP_CS"/>
</dbReference>
<dbReference type="InterPro" id="IPR008991">
    <property type="entry name" value="Translation_prot_SH3-like_sf"/>
</dbReference>
<dbReference type="NCBIfam" id="NF003392">
    <property type="entry name" value="PRK04542.1"/>
    <property type="match status" value="1"/>
</dbReference>
<dbReference type="NCBIfam" id="TIGR02178">
    <property type="entry name" value="yeiP"/>
    <property type="match status" value="1"/>
</dbReference>
<dbReference type="PANTHER" id="PTHR30053">
    <property type="entry name" value="ELONGATION FACTOR P"/>
    <property type="match status" value="1"/>
</dbReference>
<dbReference type="PANTHER" id="PTHR30053:SF14">
    <property type="entry name" value="TRANSLATION ELONGATION FACTOR KOW-LIKE DOMAIN-CONTAINING PROTEIN"/>
    <property type="match status" value="1"/>
</dbReference>
<dbReference type="Pfam" id="PF01132">
    <property type="entry name" value="EFP"/>
    <property type="match status" value="1"/>
</dbReference>
<dbReference type="Pfam" id="PF08207">
    <property type="entry name" value="EFP_N"/>
    <property type="match status" value="1"/>
</dbReference>
<dbReference type="Pfam" id="PF09285">
    <property type="entry name" value="Elong-fact-P_C"/>
    <property type="match status" value="1"/>
</dbReference>
<dbReference type="PIRSF" id="PIRSF005901">
    <property type="entry name" value="EF-P"/>
    <property type="match status" value="1"/>
</dbReference>
<dbReference type="SMART" id="SM01185">
    <property type="entry name" value="EFP"/>
    <property type="match status" value="1"/>
</dbReference>
<dbReference type="SMART" id="SM00841">
    <property type="entry name" value="Elong-fact-P_C"/>
    <property type="match status" value="1"/>
</dbReference>
<dbReference type="SUPFAM" id="SSF50249">
    <property type="entry name" value="Nucleic acid-binding proteins"/>
    <property type="match status" value="2"/>
</dbReference>
<dbReference type="SUPFAM" id="SSF50104">
    <property type="entry name" value="Translation proteins SH3-like domain"/>
    <property type="match status" value="1"/>
</dbReference>
<dbReference type="PROSITE" id="PS01275">
    <property type="entry name" value="EFP"/>
    <property type="match status" value="1"/>
</dbReference>
<proteinExistence type="inferred from homology"/>
<organism>
    <name type="scientific">Xanthomonas oryzae pv. oryzae (strain MAFF 311018)</name>
    <dbReference type="NCBI Taxonomy" id="342109"/>
    <lineage>
        <taxon>Bacteria</taxon>
        <taxon>Pseudomonadati</taxon>
        <taxon>Pseudomonadota</taxon>
        <taxon>Gammaproteobacteria</taxon>
        <taxon>Lysobacterales</taxon>
        <taxon>Lysobacteraceae</taxon>
        <taxon>Xanthomonas</taxon>
    </lineage>
</organism>